<protein>
    <recommendedName>
        <fullName evidence="1">Adenylate kinase</fullName>
        <shortName evidence="1">AK</shortName>
        <ecNumber evidence="1">2.7.4.3</ecNumber>
    </recommendedName>
    <alternativeName>
        <fullName evidence="1">ATP-AMP transphosphorylase</fullName>
    </alternativeName>
    <alternativeName>
        <fullName evidence="1">ATP:AMP phosphotransferase</fullName>
    </alternativeName>
    <alternativeName>
        <fullName evidence="1">Adenylate monophosphate kinase</fullName>
    </alternativeName>
</protein>
<dbReference type="EC" id="2.7.4.3" evidence="1"/>
<dbReference type="EMBL" id="CP000910">
    <property type="protein sequence ID" value="ABY23875.1"/>
    <property type="molecule type" value="Genomic_DNA"/>
</dbReference>
<dbReference type="RefSeq" id="WP_012245541.1">
    <property type="nucleotide sequence ID" value="NC_010168.1"/>
</dbReference>
<dbReference type="SMR" id="A9WST7"/>
<dbReference type="STRING" id="288705.RSal33209_2143"/>
<dbReference type="KEGG" id="rsa:RSal33209_2143"/>
<dbReference type="eggNOG" id="COG0563">
    <property type="taxonomic scope" value="Bacteria"/>
</dbReference>
<dbReference type="HOGENOM" id="CLU_032354_4_1_11"/>
<dbReference type="UniPathway" id="UPA00588">
    <property type="reaction ID" value="UER00649"/>
</dbReference>
<dbReference type="Proteomes" id="UP000002007">
    <property type="component" value="Chromosome"/>
</dbReference>
<dbReference type="GO" id="GO:0005737">
    <property type="term" value="C:cytoplasm"/>
    <property type="evidence" value="ECO:0007669"/>
    <property type="project" value="UniProtKB-SubCell"/>
</dbReference>
<dbReference type="GO" id="GO:0004017">
    <property type="term" value="F:adenylate kinase activity"/>
    <property type="evidence" value="ECO:0007669"/>
    <property type="project" value="UniProtKB-UniRule"/>
</dbReference>
<dbReference type="GO" id="GO:0005524">
    <property type="term" value="F:ATP binding"/>
    <property type="evidence" value="ECO:0007669"/>
    <property type="project" value="UniProtKB-UniRule"/>
</dbReference>
<dbReference type="GO" id="GO:0044209">
    <property type="term" value="P:AMP salvage"/>
    <property type="evidence" value="ECO:0007669"/>
    <property type="project" value="UniProtKB-UniRule"/>
</dbReference>
<dbReference type="CDD" id="cd01428">
    <property type="entry name" value="ADK"/>
    <property type="match status" value="1"/>
</dbReference>
<dbReference type="Gene3D" id="3.40.50.300">
    <property type="entry name" value="P-loop containing nucleotide triphosphate hydrolases"/>
    <property type="match status" value="1"/>
</dbReference>
<dbReference type="HAMAP" id="MF_00235">
    <property type="entry name" value="Adenylate_kinase_Adk"/>
    <property type="match status" value="1"/>
</dbReference>
<dbReference type="InterPro" id="IPR000850">
    <property type="entry name" value="Adenylat/UMP-CMP_kin"/>
</dbReference>
<dbReference type="InterPro" id="IPR033690">
    <property type="entry name" value="Adenylat_kinase_CS"/>
</dbReference>
<dbReference type="InterPro" id="IPR027417">
    <property type="entry name" value="P-loop_NTPase"/>
</dbReference>
<dbReference type="NCBIfam" id="NF001381">
    <property type="entry name" value="PRK00279.1-3"/>
    <property type="match status" value="1"/>
</dbReference>
<dbReference type="NCBIfam" id="NF011100">
    <property type="entry name" value="PRK14527.1"/>
    <property type="match status" value="1"/>
</dbReference>
<dbReference type="NCBIfam" id="NF011101">
    <property type="entry name" value="PRK14528.1"/>
    <property type="match status" value="1"/>
</dbReference>
<dbReference type="NCBIfam" id="NF011104">
    <property type="entry name" value="PRK14531.1"/>
    <property type="match status" value="1"/>
</dbReference>
<dbReference type="NCBIfam" id="NF011105">
    <property type="entry name" value="PRK14532.1"/>
    <property type="match status" value="1"/>
</dbReference>
<dbReference type="PANTHER" id="PTHR23359">
    <property type="entry name" value="NUCLEOTIDE KINASE"/>
    <property type="match status" value="1"/>
</dbReference>
<dbReference type="Pfam" id="PF00406">
    <property type="entry name" value="ADK"/>
    <property type="match status" value="1"/>
</dbReference>
<dbReference type="PRINTS" id="PR00094">
    <property type="entry name" value="ADENYLTKNASE"/>
</dbReference>
<dbReference type="SUPFAM" id="SSF52540">
    <property type="entry name" value="P-loop containing nucleoside triphosphate hydrolases"/>
    <property type="match status" value="1"/>
</dbReference>
<dbReference type="PROSITE" id="PS00113">
    <property type="entry name" value="ADENYLATE_KINASE"/>
    <property type="match status" value="1"/>
</dbReference>
<reference key="1">
    <citation type="journal article" date="2008" name="J. Bacteriol.">
        <title>Genome sequence of the fish pathogen Renibacterium salmoninarum suggests reductive evolution away from an environmental Arthrobacter ancestor.</title>
        <authorList>
            <person name="Wiens G.D."/>
            <person name="Rockey D.D."/>
            <person name="Wu Z."/>
            <person name="Chang J."/>
            <person name="Levy R."/>
            <person name="Crane S."/>
            <person name="Chen D.S."/>
            <person name="Capri G.R."/>
            <person name="Burnett J.R."/>
            <person name="Sudheesh P.S."/>
            <person name="Schipma M.J."/>
            <person name="Burd H."/>
            <person name="Bhattacharyya A."/>
            <person name="Rhodes L.D."/>
            <person name="Kaul R."/>
            <person name="Strom M.S."/>
        </authorList>
    </citation>
    <scope>NUCLEOTIDE SEQUENCE [LARGE SCALE GENOMIC DNA]</scope>
    <source>
        <strain>ATCC 33209 / DSM 20767 / JCM 11484 / NBRC 15589 / NCIMB 2235</strain>
    </source>
</reference>
<proteinExistence type="inferred from homology"/>
<organism>
    <name type="scientific">Renibacterium salmoninarum (strain ATCC 33209 / DSM 20767 / JCM 11484 / NBRC 15589 / NCIMB 2235)</name>
    <dbReference type="NCBI Taxonomy" id="288705"/>
    <lineage>
        <taxon>Bacteria</taxon>
        <taxon>Bacillati</taxon>
        <taxon>Actinomycetota</taxon>
        <taxon>Actinomycetes</taxon>
        <taxon>Micrococcales</taxon>
        <taxon>Micrococcaceae</taxon>
        <taxon>Renibacterium</taxon>
    </lineage>
</organism>
<evidence type="ECO:0000255" key="1">
    <source>
        <dbReference type="HAMAP-Rule" id="MF_00235"/>
    </source>
</evidence>
<feature type="chain" id="PRO_1000204423" description="Adenylate kinase">
    <location>
        <begin position="1"/>
        <end position="193"/>
    </location>
</feature>
<feature type="region of interest" description="NMP" evidence="1">
    <location>
        <begin position="31"/>
        <end position="60"/>
    </location>
</feature>
<feature type="region of interest" description="LID" evidence="1">
    <location>
        <begin position="127"/>
        <end position="137"/>
    </location>
</feature>
<feature type="binding site" evidence="1">
    <location>
        <begin position="11"/>
        <end position="16"/>
    </location>
    <ligand>
        <name>ATP</name>
        <dbReference type="ChEBI" id="CHEBI:30616"/>
    </ligand>
</feature>
<feature type="binding site" evidence="1">
    <location>
        <position position="32"/>
    </location>
    <ligand>
        <name>AMP</name>
        <dbReference type="ChEBI" id="CHEBI:456215"/>
    </ligand>
</feature>
<feature type="binding site" evidence="1">
    <location>
        <position position="37"/>
    </location>
    <ligand>
        <name>AMP</name>
        <dbReference type="ChEBI" id="CHEBI:456215"/>
    </ligand>
</feature>
<feature type="binding site" evidence="1">
    <location>
        <begin position="58"/>
        <end position="60"/>
    </location>
    <ligand>
        <name>AMP</name>
        <dbReference type="ChEBI" id="CHEBI:456215"/>
    </ligand>
</feature>
<feature type="binding site" evidence="1">
    <location>
        <begin position="86"/>
        <end position="89"/>
    </location>
    <ligand>
        <name>AMP</name>
        <dbReference type="ChEBI" id="CHEBI:456215"/>
    </ligand>
</feature>
<feature type="binding site" evidence="1">
    <location>
        <position position="93"/>
    </location>
    <ligand>
        <name>AMP</name>
        <dbReference type="ChEBI" id="CHEBI:456215"/>
    </ligand>
</feature>
<feature type="binding site" evidence="1">
    <location>
        <position position="128"/>
    </location>
    <ligand>
        <name>ATP</name>
        <dbReference type="ChEBI" id="CHEBI:30616"/>
    </ligand>
</feature>
<feature type="binding site" evidence="1">
    <location>
        <position position="134"/>
    </location>
    <ligand>
        <name>AMP</name>
        <dbReference type="ChEBI" id="CHEBI:456215"/>
    </ligand>
</feature>
<feature type="binding site" evidence="1">
    <location>
        <position position="145"/>
    </location>
    <ligand>
        <name>AMP</name>
        <dbReference type="ChEBI" id="CHEBI:456215"/>
    </ligand>
</feature>
<feature type="binding site" evidence="1">
    <location>
        <position position="173"/>
    </location>
    <ligand>
        <name>ATP</name>
        <dbReference type="ChEBI" id="CHEBI:30616"/>
    </ligand>
</feature>
<comment type="function">
    <text evidence="1">Catalyzes the reversible transfer of the terminal phosphate group between ATP and AMP. Plays an important role in cellular energy homeostasis and in adenine nucleotide metabolism.</text>
</comment>
<comment type="catalytic activity">
    <reaction evidence="1">
        <text>AMP + ATP = 2 ADP</text>
        <dbReference type="Rhea" id="RHEA:12973"/>
        <dbReference type="ChEBI" id="CHEBI:30616"/>
        <dbReference type="ChEBI" id="CHEBI:456215"/>
        <dbReference type="ChEBI" id="CHEBI:456216"/>
        <dbReference type="EC" id="2.7.4.3"/>
    </reaction>
</comment>
<comment type="pathway">
    <text evidence="1">Purine metabolism; AMP biosynthesis via salvage pathway; AMP from ADP: step 1/1.</text>
</comment>
<comment type="subunit">
    <text evidence="1">Monomer.</text>
</comment>
<comment type="subcellular location">
    <subcellularLocation>
        <location evidence="1">Cytoplasm</location>
    </subcellularLocation>
</comment>
<comment type="domain">
    <text evidence="1">Consists of three domains, a large central CORE domain and two small peripheral domains, NMPbind and LID, which undergo movements during catalysis. The LID domain closes over the site of phosphoryl transfer upon ATP binding. Assembling and dissambling the active center during each catalytic cycle provides an effective means to prevent ATP hydrolysis.</text>
</comment>
<comment type="similarity">
    <text evidence="1">Belongs to the adenylate kinase family.</text>
</comment>
<name>KAD_RENSM</name>
<sequence>MTRMLIVGPPGSGKGTQAEWISDRLGIVAISTGDIFRANVKGETPLGLEAKKYMDAGDYVPDSVTNKMVRDRLQQEDVQHGFLLDGYPRTSAQVNELDDILSAGGEKLDVVLQLTADDEELVRRLLGRAKESGRSDDDEKVIRHRLNLYHTQTEAVVVRYQKLGLLAKVDGIGAIDEVTDRIMAAIDGVRAAK</sequence>
<gene>
    <name evidence="1" type="primary">adk</name>
    <name type="ordered locus">RSal33209_2143</name>
</gene>
<keyword id="KW-0067">ATP-binding</keyword>
<keyword id="KW-0963">Cytoplasm</keyword>
<keyword id="KW-0418">Kinase</keyword>
<keyword id="KW-0545">Nucleotide biosynthesis</keyword>
<keyword id="KW-0547">Nucleotide-binding</keyword>
<keyword id="KW-1185">Reference proteome</keyword>
<keyword id="KW-0808">Transferase</keyword>
<accession>A9WST7</accession>